<gene>
    <name type="primary">PPM1</name>
    <name type="ordered locus">YDR435C</name>
</gene>
<name>LCMT1_YEAST</name>
<keyword id="KW-0002">3D-structure</keyword>
<keyword id="KW-0489">Methyltransferase</keyword>
<keyword id="KW-1185">Reference proteome</keyword>
<keyword id="KW-0949">S-adenosyl-L-methionine</keyword>
<keyword id="KW-0808">Transferase</keyword>
<evidence type="ECO:0000269" key="1">
    <source>
    </source>
</evidence>
<evidence type="ECO:0000269" key="2">
    <source>
    </source>
</evidence>
<evidence type="ECO:0000305" key="3"/>
<evidence type="ECO:0007829" key="4">
    <source>
        <dbReference type="PDB" id="1RJD"/>
    </source>
</evidence>
<evidence type="ECO:0007829" key="5">
    <source>
        <dbReference type="PDB" id="1RJE"/>
    </source>
</evidence>
<evidence type="ECO:0007829" key="6">
    <source>
        <dbReference type="PDB" id="1RJG"/>
    </source>
</evidence>
<accession>Q04081</accession>
<accession>D6VT62</accession>
<organism>
    <name type="scientific">Saccharomyces cerevisiae (strain ATCC 204508 / S288c)</name>
    <name type="common">Baker's yeast</name>
    <dbReference type="NCBI Taxonomy" id="559292"/>
    <lineage>
        <taxon>Eukaryota</taxon>
        <taxon>Fungi</taxon>
        <taxon>Dikarya</taxon>
        <taxon>Ascomycota</taxon>
        <taxon>Saccharomycotina</taxon>
        <taxon>Saccharomycetes</taxon>
        <taxon>Saccharomycetales</taxon>
        <taxon>Saccharomycetaceae</taxon>
        <taxon>Saccharomyces</taxon>
    </lineage>
</organism>
<comment type="function">
    <text evidence="1 2">Methylates the carboxyl group of the C-terminal leucine residue of protein phosphatase 2A catalytic subunits to form alpha-leucine ester residues. Acts on the two major protein phosphatase 2A catalytic subunits, PPH21 and PPH22.</text>
</comment>
<comment type="catalytic activity">
    <reaction>
        <text>[phosphatase 2A protein]-C-terminal L-leucine + S-adenosyl-L-methionine = [phosphatase 2A protein]-C-terminal L-leucine methyl ester + S-adenosyl-L-homocysteine</text>
        <dbReference type="Rhea" id="RHEA:48544"/>
        <dbReference type="Rhea" id="RHEA-COMP:12134"/>
        <dbReference type="Rhea" id="RHEA-COMP:12135"/>
        <dbReference type="ChEBI" id="CHEBI:57856"/>
        <dbReference type="ChEBI" id="CHEBI:59789"/>
        <dbReference type="ChEBI" id="CHEBI:90516"/>
        <dbReference type="ChEBI" id="CHEBI:90517"/>
        <dbReference type="EC" id="2.1.1.233"/>
    </reaction>
</comment>
<comment type="activity regulation">
    <text>Inhibited by S-adenosyl-L-homocysteine.</text>
</comment>
<comment type="similarity">
    <text evidence="3">Belongs to the methyltransferase superfamily. LCMT family.</text>
</comment>
<proteinExistence type="evidence at protein level"/>
<reference key="1">
    <citation type="journal article" date="1997" name="Nature">
        <title>The nucleotide sequence of Saccharomyces cerevisiae chromosome IV.</title>
        <authorList>
            <person name="Jacq C."/>
            <person name="Alt-Moerbe J."/>
            <person name="Andre B."/>
            <person name="Arnold W."/>
            <person name="Bahr A."/>
            <person name="Ballesta J.P.G."/>
            <person name="Bargues M."/>
            <person name="Baron L."/>
            <person name="Becker A."/>
            <person name="Biteau N."/>
            <person name="Bloecker H."/>
            <person name="Blugeon C."/>
            <person name="Boskovic J."/>
            <person name="Brandt P."/>
            <person name="Brueckner M."/>
            <person name="Buitrago M.J."/>
            <person name="Coster F."/>
            <person name="Delaveau T."/>
            <person name="del Rey F."/>
            <person name="Dujon B."/>
            <person name="Eide L.G."/>
            <person name="Garcia-Cantalejo J.M."/>
            <person name="Goffeau A."/>
            <person name="Gomez-Peris A."/>
            <person name="Granotier C."/>
            <person name="Hanemann V."/>
            <person name="Hankeln T."/>
            <person name="Hoheisel J.D."/>
            <person name="Jaeger W."/>
            <person name="Jimenez A."/>
            <person name="Jonniaux J.-L."/>
            <person name="Kraemer C."/>
            <person name="Kuester H."/>
            <person name="Laamanen P."/>
            <person name="Legros Y."/>
            <person name="Louis E.J."/>
            <person name="Moeller-Rieker S."/>
            <person name="Monnet A."/>
            <person name="Moro M."/>
            <person name="Mueller-Auer S."/>
            <person name="Nussbaumer B."/>
            <person name="Paricio N."/>
            <person name="Paulin L."/>
            <person name="Perea J."/>
            <person name="Perez-Alonso M."/>
            <person name="Perez-Ortin J.E."/>
            <person name="Pohl T.M."/>
            <person name="Prydz H."/>
            <person name="Purnelle B."/>
            <person name="Rasmussen S.W."/>
            <person name="Remacha M.A."/>
            <person name="Revuelta J.L."/>
            <person name="Rieger M."/>
            <person name="Salom D."/>
            <person name="Saluz H.P."/>
            <person name="Saiz J.E."/>
            <person name="Saren A.-M."/>
            <person name="Schaefer M."/>
            <person name="Scharfe M."/>
            <person name="Schmidt E.R."/>
            <person name="Schneider C."/>
            <person name="Scholler P."/>
            <person name="Schwarz S."/>
            <person name="Soler-Mira A."/>
            <person name="Urrestarazu L.A."/>
            <person name="Verhasselt P."/>
            <person name="Vissers S."/>
            <person name="Voet M."/>
            <person name="Volckaert G."/>
            <person name="Wagner G."/>
            <person name="Wambutt R."/>
            <person name="Wedler E."/>
            <person name="Wedler H."/>
            <person name="Woelfl S."/>
            <person name="Harris D.E."/>
            <person name="Bowman S."/>
            <person name="Brown D."/>
            <person name="Churcher C.M."/>
            <person name="Connor R."/>
            <person name="Dedman K."/>
            <person name="Gentles S."/>
            <person name="Hamlin N."/>
            <person name="Hunt S."/>
            <person name="Jones L."/>
            <person name="McDonald S."/>
            <person name="Murphy L.D."/>
            <person name="Niblett D."/>
            <person name="Odell C."/>
            <person name="Oliver K."/>
            <person name="Rajandream M.A."/>
            <person name="Richards C."/>
            <person name="Shore L."/>
            <person name="Walsh S.V."/>
            <person name="Barrell B.G."/>
            <person name="Dietrich F.S."/>
            <person name="Mulligan J.T."/>
            <person name="Allen E."/>
            <person name="Araujo R."/>
            <person name="Aviles E."/>
            <person name="Berno A."/>
            <person name="Carpenter J."/>
            <person name="Chen E."/>
            <person name="Cherry J.M."/>
            <person name="Chung E."/>
            <person name="Duncan M."/>
            <person name="Hunicke-Smith S."/>
            <person name="Hyman R.W."/>
            <person name="Komp C."/>
            <person name="Lashkari D."/>
            <person name="Lew H."/>
            <person name="Lin D."/>
            <person name="Mosedale D."/>
            <person name="Nakahara K."/>
            <person name="Namath A."/>
            <person name="Oefner P."/>
            <person name="Oh C."/>
            <person name="Petel F.X."/>
            <person name="Roberts D."/>
            <person name="Schramm S."/>
            <person name="Schroeder M."/>
            <person name="Shogren T."/>
            <person name="Shroff N."/>
            <person name="Winant A."/>
            <person name="Yelton M.A."/>
            <person name="Botstein D."/>
            <person name="Davis R.W."/>
            <person name="Johnston M."/>
            <person name="Andrews S."/>
            <person name="Brinkman R."/>
            <person name="Cooper J."/>
            <person name="Ding H."/>
            <person name="Du Z."/>
            <person name="Favello A."/>
            <person name="Fulton L."/>
            <person name="Gattung S."/>
            <person name="Greco T."/>
            <person name="Hallsworth K."/>
            <person name="Hawkins J."/>
            <person name="Hillier L.W."/>
            <person name="Jier M."/>
            <person name="Johnson D."/>
            <person name="Johnston L."/>
            <person name="Kirsten J."/>
            <person name="Kucaba T."/>
            <person name="Langston Y."/>
            <person name="Latreille P."/>
            <person name="Le T."/>
            <person name="Mardis E."/>
            <person name="Menezes S."/>
            <person name="Miller N."/>
            <person name="Nhan M."/>
            <person name="Pauley A."/>
            <person name="Peluso D."/>
            <person name="Rifkin L."/>
            <person name="Riles L."/>
            <person name="Taich A."/>
            <person name="Trevaskis E."/>
            <person name="Vignati D."/>
            <person name="Wilcox L."/>
            <person name="Wohldman P."/>
            <person name="Vaudin M."/>
            <person name="Wilson R."/>
            <person name="Waterston R."/>
            <person name="Albermann K."/>
            <person name="Hani J."/>
            <person name="Heumann K."/>
            <person name="Kleine K."/>
            <person name="Mewes H.-W."/>
            <person name="Zollner A."/>
            <person name="Zaccaria P."/>
        </authorList>
    </citation>
    <scope>NUCLEOTIDE SEQUENCE [LARGE SCALE GENOMIC DNA]</scope>
    <source>
        <strain>ATCC 204508 / S288c</strain>
    </source>
</reference>
<reference key="2">
    <citation type="journal article" date="2014" name="G3 (Bethesda)">
        <title>The reference genome sequence of Saccharomyces cerevisiae: Then and now.</title>
        <authorList>
            <person name="Engel S.R."/>
            <person name="Dietrich F.S."/>
            <person name="Fisk D.G."/>
            <person name="Binkley G."/>
            <person name="Balakrishnan R."/>
            <person name="Costanzo M.C."/>
            <person name="Dwight S.S."/>
            <person name="Hitz B.C."/>
            <person name="Karra K."/>
            <person name="Nash R.S."/>
            <person name="Weng S."/>
            <person name="Wong E.D."/>
            <person name="Lloyd P."/>
            <person name="Skrzypek M.S."/>
            <person name="Miyasato S.R."/>
            <person name="Simison M."/>
            <person name="Cherry J.M."/>
        </authorList>
    </citation>
    <scope>GENOME REANNOTATION</scope>
    <source>
        <strain>ATCC 204508 / S288c</strain>
    </source>
</reference>
<reference key="3">
    <citation type="journal article" date="2000" name="EMBO J.">
        <title>Carboxyl methylation of the phosphoprotein phosphatase 2A catalytic subunit promotes its functional association with regulatory subunits in vivo.</title>
        <authorList>
            <person name="Wu J."/>
            <person name="Tolstykh T."/>
            <person name="Lee J."/>
            <person name="Boyd K."/>
            <person name="Stock J.B."/>
            <person name="Broach J.R."/>
        </authorList>
    </citation>
    <scope>FUNCTION</scope>
</reference>
<reference key="4">
    <citation type="journal article" date="2001" name="Arch. Biochem. Biophys.">
        <title>Protein phosphatase methyltransferase 1 (Ppm1p) is the sole activity responsible for modification of the major forms of protein phosphatase 2A in yeast.</title>
        <authorList>
            <person name="Kalhor H.R."/>
            <person name="Luk K."/>
            <person name="Ramos A."/>
            <person name="Zobel-Thropp P."/>
            <person name="Clarke S."/>
        </authorList>
    </citation>
    <scope>FUNCTION</scope>
</reference>
<reference key="5">
    <citation type="journal article" date="2004" name="J. Biol. Chem.">
        <title>Structure of protein phosphatase methyltransferase 1 (PPM1), a leucine carboxyl methyltransferase involved in the regulation of protein phosphatase 2A activity.</title>
        <authorList>
            <person name="Leulliot N."/>
            <person name="Quevillon-Cheruel S."/>
            <person name="Sorel I."/>
            <person name="de La Sierra-Gallay I.L."/>
            <person name="Collinet B."/>
            <person name="Graille M."/>
            <person name="Blondeau K."/>
            <person name="Bettache N."/>
            <person name="Poupon A."/>
            <person name="Janin J."/>
            <person name="van Tilbeurgh H."/>
        </authorList>
    </citation>
    <scope>X-RAY CRYSTALLOGRAPHY (1.8 ANGSTROMS) IN COMPLEXES WITH S-ADENOSYL-L-METHIONINE AND S-ADENOSYL-L-HOMOCYSTEINE</scope>
</reference>
<sequence length="328" mass="37695">MERIIQQTDYDALSCKLAAISVGYLPSSGLQRLSVDLSKKYTEWHRSYLITLKKFSRRAFGKVDKAMRSSFPVMNYGTYLRTVGIDAAILEFLVANEKVQVVNLGCGSDLRMLPLLQMFPHLAYVDIDYNESVELKNSILRESEILRISLGLSKEDTAKSPFLIDQGRYKLAACDLNDITETTRLLDVCTKREIPTIVISECLLCYMHNNESQLLINTIMSKFSHGLWISYDPIGGSQPNDRFGAIMQSNLKESRNLEMPTLMTYNSKEKYASRWSAAPNVIVNDMWEIFNAQIPESERKRLRSLQFLDELEELKVMQTHYILMKAQW</sequence>
<dbReference type="EC" id="2.1.1.233"/>
<dbReference type="EMBL" id="U33007">
    <property type="protein sequence ID" value="AAB64876.1"/>
    <property type="molecule type" value="Genomic_DNA"/>
</dbReference>
<dbReference type="EMBL" id="BK006938">
    <property type="protein sequence ID" value="DAA12272.1"/>
    <property type="molecule type" value="Genomic_DNA"/>
</dbReference>
<dbReference type="PIR" id="S69715">
    <property type="entry name" value="S69715"/>
</dbReference>
<dbReference type="RefSeq" id="NP_010723.1">
    <property type="nucleotide sequence ID" value="NM_001180743.1"/>
</dbReference>
<dbReference type="PDB" id="1RJD">
    <property type="method" value="X-ray"/>
    <property type="resolution" value="1.80 A"/>
    <property type="chains" value="A/B/C=1-328"/>
</dbReference>
<dbReference type="PDB" id="1RJE">
    <property type="method" value="X-ray"/>
    <property type="resolution" value="2.00 A"/>
    <property type="chains" value="A/B/C=1-328"/>
</dbReference>
<dbReference type="PDB" id="1RJF">
    <property type="method" value="X-ray"/>
    <property type="resolution" value="2.25 A"/>
    <property type="chains" value="A/B/C=1-328"/>
</dbReference>
<dbReference type="PDB" id="1RJG">
    <property type="method" value="X-ray"/>
    <property type="resolution" value="2.61 A"/>
    <property type="chains" value="A=1-328"/>
</dbReference>
<dbReference type="PDB" id="2OB1">
    <property type="method" value="X-ray"/>
    <property type="resolution" value="1.90 A"/>
    <property type="chains" value="A/B/C=10-328"/>
</dbReference>
<dbReference type="PDB" id="2OB2">
    <property type="method" value="X-ray"/>
    <property type="resolution" value="1.92 A"/>
    <property type="chains" value="A/B/C=2-328"/>
</dbReference>
<dbReference type="PDBsum" id="1RJD"/>
<dbReference type="PDBsum" id="1RJE"/>
<dbReference type="PDBsum" id="1RJF"/>
<dbReference type="PDBsum" id="1RJG"/>
<dbReference type="PDBsum" id="2OB1"/>
<dbReference type="PDBsum" id="2OB2"/>
<dbReference type="SMR" id="Q04081"/>
<dbReference type="BioGRID" id="32491">
    <property type="interactions" value="207"/>
</dbReference>
<dbReference type="DIP" id="DIP-5435N"/>
<dbReference type="FunCoup" id="Q04081">
    <property type="interactions" value="624"/>
</dbReference>
<dbReference type="STRING" id="4932.YDR435C"/>
<dbReference type="PaxDb" id="4932-YDR435C"/>
<dbReference type="PeptideAtlas" id="Q04081"/>
<dbReference type="EnsemblFungi" id="YDR435C_mRNA">
    <property type="protein sequence ID" value="YDR435C"/>
    <property type="gene ID" value="YDR435C"/>
</dbReference>
<dbReference type="GeneID" id="852045"/>
<dbReference type="KEGG" id="sce:YDR435C"/>
<dbReference type="AGR" id="SGD:S000002843"/>
<dbReference type="SGD" id="S000002843">
    <property type="gene designation" value="PPM1"/>
</dbReference>
<dbReference type="VEuPathDB" id="FungiDB:YDR435C"/>
<dbReference type="eggNOG" id="KOG2918">
    <property type="taxonomic scope" value="Eukaryota"/>
</dbReference>
<dbReference type="GeneTree" id="ENSGT00940000156372"/>
<dbReference type="HOGENOM" id="CLU_031312_1_0_1"/>
<dbReference type="InParanoid" id="Q04081"/>
<dbReference type="OMA" id="IIYEPIR"/>
<dbReference type="OrthoDB" id="203237at2759"/>
<dbReference type="BioCyc" id="YEAST:YDR435C-MONOMER"/>
<dbReference type="BRENDA" id="2.1.1.233">
    <property type="organism ID" value="984"/>
</dbReference>
<dbReference type="Reactome" id="R-SCE-69273">
    <property type="pathway name" value="Cyclin A/B1/B2 associated events during G2/M transition"/>
</dbReference>
<dbReference type="BioGRID-ORCS" id="852045">
    <property type="hits" value="0 hits in 10 CRISPR screens"/>
</dbReference>
<dbReference type="EvolutionaryTrace" id="Q04081"/>
<dbReference type="PRO" id="PR:Q04081"/>
<dbReference type="Proteomes" id="UP000002311">
    <property type="component" value="Chromosome IV"/>
</dbReference>
<dbReference type="RNAct" id="Q04081">
    <property type="molecule type" value="protein"/>
</dbReference>
<dbReference type="GO" id="GO:0018423">
    <property type="term" value="F:protein C-terminal leucine carboxyl O-methyltransferase activity"/>
    <property type="evidence" value="ECO:0000315"/>
    <property type="project" value="SGD"/>
</dbReference>
<dbReference type="GO" id="GO:0032259">
    <property type="term" value="P:methylation"/>
    <property type="evidence" value="ECO:0007669"/>
    <property type="project" value="UniProtKB-KW"/>
</dbReference>
<dbReference type="GO" id="GO:0065003">
    <property type="term" value="P:protein-containing complex assembly"/>
    <property type="evidence" value="ECO:0000315"/>
    <property type="project" value="SGD"/>
</dbReference>
<dbReference type="GO" id="GO:0010506">
    <property type="term" value="P:regulation of autophagy"/>
    <property type="evidence" value="ECO:0000315"/>
    <property type="project" value="SGD"/>
</dbReference>
<dbReference type="FunFam" id="3.40.50.150:FF:000568">
    <property type="entry name" value="Leucine carboxyl methyltransferase 1"/>
    <property type="match status" value="1"/>
</dbReference>
<dbReference type="Gene3D" id="3.40.50.150">
    <property type="entry name" value="Vaccinia Virus protein VP39"/>
    <property type="match status" value="1"/>
</dbReference>
<dbReference type="InterPro" id="IPR016651">
    <property type="entry name" value="LCMT1"/>
</dbReference>
<dbReference type="InterPro" id="IPR007213">
    <property type="entry name" value="Ppm1/Ppm2/Tcmp"/>
</dbReference>
<dbReference type="InterPro" id="IPR029063">
    <property type="entry name" value="SAM-dependent_MTases_sf"/>
</dbReference>
<dbReference type="PANTHER" id="PTHR13600">
    <property type="entry name" value="LEUCINE CARBOXYL METHYLTRANSFERASE"/>
    <property type="match status" value="1"/>
</dbReference>
<dbReference type="PANTHER" id="PTHR13600:SF21">
    <property type="entry name" value="LEUCINE CARBOXYL METHYLTRANSFERASE 1"/>
    <property type="match status" value="1"/>
</dbReference>
<dbReference type="Pfam" id="PF04072">
    <property type="entry name" value="LCM"/>
    <property type="match status" value="1"/>
</dbReference>
<dbReference type="PIRSF" id="PIRSF016305">
    <property type="entry name" value="LCM_mtfrase"/>
    <property type="match status" value="1"/>
</dbReference>
<dbReference type="SUPFAM" id="SSF53335">
    <property type="entry name" value="S-adenosyl-L-methionine-dependent methyltransferases"/>
    <property type="match status" value="1"/>
</dbReference>
<protein>
    <recommendedName>
        <fullName>Leucine carboxyl methyltransferase 1</fullName>
        <ecNumber>2.1.1.233</ecNumber>
    </recommendedName>
    <alternativeName>
        <fullName>Protein phosphatase methyltransferase 1</fullName>
    </alternativeName>
    <alternativeName>
        <fullName>[Phosphatase 2A protein]-leucine-carboxy methyltransferase 1</fullName>
    </alternativeName>
</protein>
<feature type="chain" id="PRO_0000226135" description="Leucine carboxyl methyltransferase 1">
    <location>
        <begin position="1"/>
        <end position="328"/>
    </location>
</feature>
<feature type="binding site">
    <location>
        <position position="81"/>
    </location>
    <ligand>
        <name>S-adenosyl-L-methionine</name>
        <dbReference type="ChEBI" id="CHEBI:59789"/>
    </ligand>
</feature>
<feature type="binding site">
    <location>
        <position position="105"/>
    </location>
    <ligand>
        <name>S-adenosyl-L-methionine</name>
        <dbReference type="ChEBI" id="CHEBI:59789"/>
    </ligand>
</feature>
<feature type="binding site">
    <location>
        <position position="128"/>
    </location>
    <ligand>
        <name>S-adenosyl-L-methionine</name>
        <dbReference type="ChEBI" id="CHEBI:59789"/>
    </ligand>
</feature>
<feature type="binding site">
    <location>
        <begin position="175"/>
        <end position="177"/>
    </location>
    <ligand>
        <name>S-adenosyl-L-methionine</name>
        <dbReference type="ChEBI" id="CHEBI:59789"/>
    </ligand>
</feature>
<feature type="binding site">
    <location>
        <position position="201"/>
    </location>
    <ligand>
        <name>S-adenosyl-L-methionine</name>
        <dbReference type="ChEBI" id="CHEBI:59789"/>
    </ligand>
</feature>
<feature type="helix" evidence="4">
    <location>
        <begin position="3"/>
        <end position="6"/>
    </location>
</feature>
<feature type="helix" evidence="4">
    <location>
        <begin position="8"/>
        <end position="22"/>
    </location>
</feature>
<feature type="turn" evidence="4">
    <location>
        <begin position="28"/>
        <end position="32"/>
    </location>
</feature>
<feature type="helix" evidence="4">
    <location>
        <begin position="35"/>
        <end position="55"/>
    </location>
</feature>
<feature type="helix" evidence="4">
    <location>
        <begin position="57"/>
        <end position="68"/>
    </location>
</feature>
<feature type="helix" evidence="4">
    <location>
        <begin position="72"/>
        <end position="95"/>
    </location>
</feature>
<feature type="strand" evidence="4">
    <location>
        <begin position="97"/>
        <end position="104"/>
    </location>
</feature>
<feature type="helix" evidence="4">
    <location>
        <begin position="112"/>
        <end position="118"/>
    </location>
</feature>
<feature type="strand" evidence="4">
    <location>
        <begin position="122"/>
        <end position="128"/>
    </location>
</feature>
<feature type="helix" evidence="4">
    <location>
        <begin position="130"/>
        <end position="142"/>
    </location>
</feature>
<feature type="helix" evidence="4">
    <location>
        <begin position="144"/>
        <end position="150"/>
    </location>
</feature>
<feature type="strand" evidence="4">
    <location>
        <begin position="162"/>
        <end position="165"/>
    </location>
</feature>
<feature type="strand" evidence="4">
    <location>
        <begin position="167"/>
        <end position="173"/>
    </location>
</feature>
<feature type="strand" evidence="6">
    <location>
        <begin position="176"/>
        <end position="178"/>
    </location>
</feature>
<feature type="helix" evidence="4">
    <location>
        <begin position="179"/>
        <end position="187"/>
    </location>
</feature>
<feature type="strand" evidence="5">
    <location>
        <begin position="192"/>
        <end position="194"/>
    </location>
</feature>
<feature type="strand" evidence="4">
    <location>
        <begin position="196"/>
        <end position="202"/>
    </location>
</feature>
<feature type="helix" evidence="4">
    <location>
        <begin position="204"/>
        <end position="206"/>
    </location>
</feature>
<feature type="helix" evidence="4">
    <location>
        <begin position="209"/>
        <end position="222"/>
    </location>
</feature>
<feature type="strand" evidence="4">
    <location>
        <begin position="224"/>
        <end position="233"/>
    </location>
</feature>
<feature type="helix" evidence="4">
    <location>
        <begin position="243"/>
        <end position="255"/>
    </location>
</feature>
<feature type="turn" evidence="4">
    <location>
        <begin position="260"/>
        <end position="265"/>
    </location>
</feature>
<feature type="helix" evidence="4">
    <location>
        <begin position="268"/>
        <end position="272"/>
    </location>
</feature>
<feature type="helix" evidence="4">
    <location>
        <begin position="273"/>
        <end position="275"/>
    </location>
</feature>
<feature type="strand" evidence="4">
    <location>
        <begin position="278"/>
        <end position="285"/>
    </location>
</feature>
<feature type="helix" evidence="4">
    <location>
        <begin position="286"/>
        <end position="292"/>
    </location>
</feature>
<feature type="helix" evidence="4">
    <location>
        <begin position="296"/>
        <end position="303"/>
    </location>
</feature>
<feature type="helix" evidence="4">
    <location>
        <begin position="311"/>
        <end position="318"/>
    </location>
</feature>
<feature type="strand" evidence="4">
    <location>
        <begin position="321"/>
        <end position="328"/>
    </location>
</feature>